<dbReference type="EC" id="6.1.1.15" evidence="1"/>
<dbReference type="EMBL" id="FM178379">
    <property type="protein sequence ID" value="CAQ78577.1"/>
    <property type="molecule type" value="Genomic_DNA"/>
</dbReference>
<dbReference type="RefSeq" id="WP_012549675.1">
    <property type="nucleotide sequence ID" value="NC_011312.1"/>
</dbReference>
<dbReference type="SMR" id="B6EHZ8"/>
<dbReference type="KEGG" id="vsa:VSAL_I0892"/>
<dbReference type="eggNOG" id="COG0442">
    <property type="taxonomic scope" value="Bacteria"/>
</dbReference>
<dbReference type="HOGENOM" id="CLU_016739_0_0_6"/>
<dbReference type="Proteomes" id="UP000001730">
    <property type="component" value="Chromosome 1"/>
</dbReference>
<dbReference type="GO" id="GO:0005829">
    <property type="term" value="C:cytosol"/>
    <property type="evidence" value="ECO:0007669"/>
    <property type="project" value="TreeGrafter"/>
</dbReference>
<dbReference type="GO" id="GO:0002161">
    <property type="term" value="F:aminoacyl-tRNA deacylase activity"/>
    <property type="evidence" value="ECO:0007669"/>
    <property type="project" value="InterPro"/>
</dbReference>
<dbReference type="GO" id="GO:0005524">
    <property type="term" value="F:ATP binding"/>
    <property type="evidence" value="ECO:0007669"/>
    <property type="project" value="UniProtKB-UniRule"/>
</dbReference>
<dbReference type="GO" id="GO:0004827">
    <property type="term" value="F:proline-tRNA ligase activity"/>
    <property type="evidence" value="ECO:0007669"/>
    <property type="project" value="UniProtKB-UniRule"/>
</dbReference>
<dbReference type="GO" id="GO:0006433">
    <property type="term" value="P:prolyl-tRNA aminoacylation"/>
    <property type="evidence" value="ECO:0007669"/>
    <property type="project" value="UniProtKB-UniRule"/>
</dbReference>
<dbReference type="CDD" id="cd04334">
    <property type="entry name" value="ProRS-INS"/>
    <property type="match status" value="1"/>
</dbReference>
<dbReference type="CDD" id="cd00861">
    <property type="entry name" value="ProRS_anticodon_short"/>
    <property type="match status" value="1"/>
</dbReference>
<dbReference type="CDD" id="cd00779">
    <property type="entry name" value="ProRS_core_prok"/>
    <property type="match status" value="1"/>
</dbReference>
<dbReference type="FunFam" id="3.30.930.10:FF:000043">
    <property type="entry name" value="Proline--tRNA ligase"/>
    <property type="match status" value="1"/>
</dbReference>
<dbReference type="FunFam" id="3.40.50.800:FF:000006">
    <property type="entry name" value="Proline--tRNA ligase"/>
    <property type="match status" value="1"/>
</dbReference>
<dbReference type="Gene3D" id="3.40.50.800">
    <property type="entry name" value="Anticodon-binding domain"/>
    <property type="match status" value="1"/>
</dbReference>
<dbReference type="Gene3D" id="3.30.930.10">
    <property type="entry name" value="Bira Bifunctional Protein, Domain 2"/>
    <property type="match status" value="2"/>
</dbReference>
<dbReference type="HAMAP" id="MF_01569">
    <property type="entry name" value="Pro_tRNA_synth_type1"/>
    <property type="match status" value="1"/>
</dbReference>
<dbReference type="InterPro" id="IPR002314">
    <property type="entry name" value="aa-tRNA-synt_IIb"/>
</dbReference>
<dbReference type="InterPro" id="IPR006195">
    <property type="entry name" value="aa-tRNA-synth_II"/>
</dbReference>
<dbReference type="InterPro" id="IPR045864">
    <property type="entry name" value="aa-tRNA-synth_II/BPL/LPL"/>
</dbReference>
<dbReference type="InterPro" id="IPR004154">
    <property type="entry name" value="Anticodon-bd"/>
</dbReference>
<dbReference type="InterPro" id="IPR036621">
    <property type="entry name" value="Anticodon-bd_dom_sf"/>
</dbReference>
<dbReference type="InterPro" id="IPR002316">
    <property type="entry name" value="Pro-tRNA-ligase_IIa"/>
</dbReference>
<dbReference type="InterPro" id="IPR004500">
    <property type="entry name" value="Pro-tRNA-synth_IIa_bac-type"/>
</dbReference>
<dbReference type="InterPro" id="IPR023717">
    <property type="entry name" value="Pro-tRNA-Synthase_IIa_type1"/>
</dbReference>
<dbReference type="InterPro" id="IPR050062">
    <property type="entry name" value="Pro-tRNA_synthetase"/>
</dbReference>
<dbReference type="InterPro" id="IPR044140">
    <property type="entry name" value="ProRS_anticodon_short"/>
</dbReference>
<dbReference type="InterPro" id="IPR033730">
    <property type="entry name" value="ProRS_core_prok"/>
</dbReference>
<dbReference type="InterPro" id="IPR036754">
    <property type="entry name" value="YbaK/aa-tRNA-synt-asso_dom_sf"/>
</dbReference>
<dbReference type="InterPro" id="IPR007214">
    <property type="entry name" value="YbaK/aa-tRNA-synth-assoc-dom"/>
</dbReference>
<dbReference type="NCBIfam" id="NF006625">
    <property type="entry name" value="PRK09194.1"/>
    <property type="match status" value="1"/>
</dbReference>
<dbReference type="NCBIfam" id="TIGR00409">
    <property type="entry name" value="proS_fam_II"/>
    <property type="match status" value="1"/>
</dbReference>
<dbReference type="PANTHER" id="PTHR42753">
    <property type="entry name" value="MITOCHONDRIAL RIBOSOME PROTEIN L39/PROLYL-TRNA LIGASE FAMILY MEMBER"/>
    <property type="match status" value="1"/>
</dbReference>
<dbReference type="PANTHER" id="PTHR42753:SF2">
    <property type="entry name" value="PROLINE--TRNA LIGASE"/>
    <property type="match status" value="1"/>
</dbReference>
<dbReference type="Pfam" id="PF03129">
    <property type="entry name" value="HGTP_anticodon"/>
    <property type="match status" value="1"/>
</dbReference>
<dbReference type="Pfam" id="PF00587">
    <property type="entry name" value="tRNA-synt_2b"/>
    <property type="match status" value="1"/>
</dbReference>
<dbReference type="Pfam" id="PF04073">
    <property type="entry name" value="tRNA_edit"/>
    <property type="match status" value="1"/>
</dbReference>
<dbReference type="PIRSF" id="PIRSF001535">
    <property type="entry name" value="ProRS_1"/>
    <property type="match status" value="1"/>
</dbReference>
<dbReference type="PRINTS" id="PR01046">
    <property type="entry name" value="TRNASYNTHPRO"/>
</dbReference>
<dbReference type="SUPFAM" id="SSF52954">
    <property type="entry name" value="Class II aaRS ABD-related"/>
    <property type="match status" value="1"/>
</dbReference>
<dbReference type="SUPFAM" id="SSF55681">
    <property type="entry name" value="Class II aaRS and biotin synthetases"/>
    <property type="match status" value="1"/>
</dbReference>
<dbReference type="SUPFAM" id="SSF55826">
    <property type="entry name" value="YbaK/ProRS associated domain"/>
    <property type="match status" value="1"/>
</dbReference>
<dbReference type="PROSITE" id="PS50862">
    <property type="entry name" value="AA_TRNA_LIGASE_II"/>
    <property type="match status" value="1"/>
</dbReference>
<name>SYP_ALISL</name>
<feature type="chain" id="PRO_1000199348" description="Proline--tRNA ligase">
    <location>
        <begin position="1"/>
        <end position="571"/>
    </location>
</feature>
<accession>B6EHZ8</accession>
<keyword id="KW-0030">Aminoacyl-tRNA synthetase</keyword>
<keyword id="KW-0067">ATP-binding</keyword>
<keyword id="KW-0963">Cytoplasm</keyword>
<keyword id="KW-0436">Ligase</keyword>
<keyword id="KW-0547">Nucleotide-binding</keyword>
<keyword id="KW-0648">Protein biosynthesis</keyword>
<organism>
    <name type="scientific">Aliivibrio salmonicida (strain LFI1238)</name>
    <name type="common">Vibrio salmonicida (strain LFI1238)</name>
    <dbReference type="NCBI Taxonomy" id="316275"/>
    <lineage>
        <taxon>Bacteria</taxon>
        <taxon>Pseudomonadati</taxon>
        <taxon>Pseudomonadota</taxon>
        <taxon>Gammaproteobacteria</taxon>
        <taxon>Vibrionales</taxon>
        <taxon>Vibrionaceae</taxon>
        <taxon>Aliivibrio</taxon>
    </lineage>
</organism>
<evidence type="ECO:0000255" key="1">
    <source>
        <dbReference type="HAMAP-Rule" id="MF_01569"/>
    </source>
</evidence>
<proteinExistence type="inferred from homology"/>
<gene>
    <name evidence="1" type="primary">proS</name>
    <name type="ordered locus">VSAL_I0892</name>
</gene>
<protein>
    <recommendedName>
        <fullName evidence="1">Proline--tRNA ligase</fullName>
        <ecNumber evidence="1">6.1.1.15</ecNumber>
    </recommendedName>
    <alternativeName>
        <fullName evidence="1">Prolyl-tRNA synthetase</fullName>
        <shortName evidence="1">ProRS</shortName>
    </alternativeName>
</protein>
<sequence>MRTSKYLLSTLKETPNDAEVVSHQLMLRAGMIRRLASGLYTWLPTGLRVLRKVENIVRQEIDNAGAIETLMPVVQPFELWEETGRSEEMGPELLRFTDRHARPFVLSPTAEEVITSLVRNEVNSYKQLPLNLYQIQTKFRDERRPRFGVMRAREFCMMDAYSFDIDKEGLQKSYDAMHDAYCRAFDRMGLEYRPVLADSGAIGGSGSQEFHVLAESGEDLIAFSTESDYAANIEKAEALAPTTERAAPTQEMTTVDTPNAKTIAELVEQHGIAIEKTVKTLFVKASDEVDADIIALIIRGDHELNEVKAENLPHVLSPLEMADEAQLRDLIGAGAGSLGPVGLELPFIVDRSVAVMSDFSTGANIDGKHFFGVNWDRDVQLGQIEDLRSVVEGDLSPCGQGTLQLKRGIEVGHIFQLGTAYSEAMNCGVLDANGKNSILEMGCYGIGVSRVVASAIEQNNDEYGIVWPEALAPFTVAIVPMNMYKSDRVKEAAEKLYAELTAMGIDVLFDDRKERPGVMFKDIELIGIPHTVVIGDRSMDEGNFEYKNRRANSKEVIEIANIVEHIKAQLS</sequence>
<comment type="function">
    <text evidence="1">Catalyzes the attachment of proline to tRNA(Pro) in a two-step reaction: proline is first activated by ATP to form Pro-AMP and then transferred to the acceptor end of tRNA(Pro). As ProRS can inadvertently accommodate and process non-cognate amino acids such as alanine and cysteine, to avoid such errors it has two additional distinct editing activities against alanine. One activity is designated as 'pretransfer' editing and involves the tRNA(Pro)-independent hydrolysis of activated Ala-AMP. The other activity is designated 'posttransfer' editing and involves deacylation of mischarged Ala-tRNA(Pro). The misacylated Cys-tRNA(Pro) is not edited by ProRS.</text>
</comment>
<comment type="catalytic activity">
    <reaction evidence="1">
        <text>tRNA(Pro) + L-proline + ATP = L-prolyl-tRNA(Pro) + AMP + diphosphate</text>
        <dbReference type="Rhea" id="RHEA:14305"/>
        <dbReference type="Rhea" id="RHEA-COMP:9700"/>
        <dbReference type="Rhea" id="RHEA-COMP:9702"/>
        <dbReference type="ChEBI" id="CHEBI:30616"/>
        <dbReference type="ChEBI" id="CHEBI:33019"/>
        <dbReference type="ChEBI" id="CHEBI:60039"/>
        <dbReference type="ChEBI" id="CHEBI:78442"/>
        <dbReference type="ChEBI" id="CHEBI:78532"/>
        <dbReference type="ChEBI" id="CHEBI:456215"/>
        <dbReference type="EC" id="6.1.1.15"/>
    </reaction>
</comment>
<comment type="subunit">
    <text evidence="1">Homodimer.</text>
</comment>
<comment type="subcellular location">
    <subcellularLocation>
        <location evidence="1">Cytoplasm</location>
    </subcellularLocation>
</comment>
<comment type="domain">
    <text evidence="1">Consists of three domains: the N-terminal catalytic domain, the editing domain and the C-terminal anticodon-binding domain.</text>
</comment>
<comment type="similarity">
    <text evidence="1">Belongs to the class-II aminoacyl-tRNA synthetase family. ProS type 1 subfamily.</text>
</comment>
<reference key="1">
    <citation type="journal article" date="2008" name="BMC Genomics">
        <title>The genome sequence of the fish pathogen Aliivibrio salmonicida strain LFI1238 shows extensive evidence of gene decay.</title>
        <authorList>
            <person name="Hjerde E."/>
            <person name="Lorentzen M.S."/>
            <person name="Holden M.T."/>
            <person name="Seeger K."/>
            <person name="Paulsen S."/>
            <person name="Bason N."/>
            <person name="Churcher C."/>
            <person name="Harris D."/>
            <person name="Norbertczak H."/>
            <person name="Quail M.A."/>
            <person name="Sanders S."/>
            <person name="Thurston S."/>
            <person name="Parkhill J."/>
            <person name="Willassen N.P."/>
            <person name="Thomson N.R."/>
        </authorList>
    </citation>
    <scope>NUCLEOTIDE SEQUENCE [LARGE SCALE GENOMIC DNA]</scope>
    <source>
        <strain>LFI1238</strain>
    </source>
</reference>